<evidence type="ECO:0000255" key="1">
    <source>
        <dbReference type="HAMAP-Rule" id="MF_00391"/>
    </source>
</evidence>
<evidence type="ECO:0000305" key="2"/>
<dbReference type="EMBL" id="CU207211">
    <property type="protein sequence ID" value="CAL63573.1"/>
    <property type="molecule type" value="Genomic_DNA"/>
</dbReference>
<dbReference type="SMR" id="A4GAN6"/>
<dbReference type="STRING" id="204773.HEAR3472"/>
<dbReference type="KEGG" id="har:HEAR3472"/>
<dbReference type="eggNOG" id="COG0230">
    <property type="taxonomic scope" value="Bacteria"/>
</dbReference>
<dbReference type="HOGENOM" id="CLU_129938_2_0_4"/>
<dbReference type="OrthoDB" id="9804164at2"/>
<dbReference type="Proteomes" id="UP000006697">
    <property type="component" value="Chromosome"/>
</dbReference>
<dbReference type="GO" id="GO:1990904">
    <property type="term" value="C:ribonucleoprotein complex"/>
    <property type="evidence" value="ECO:0007669"/>
    <property type="project" value="UniProtKB-KW"/>
</dbReference>
<dbReference type="GO" id="GO:0005840">
    <property type="term" value="C:ribosome"/>
    <property type="evidence" value="ECO:0007669"/>
    <property type="project" value="UniProtKB-KW"/>
</dbReference>
<dbReference type="GO" id="GO:0003735">
    <property type="term" value="F:structural constituent of ribosome"/>
    <property type="evidence" value="ECO:0007669"/>
    <property type="project" value="InterPro"/>
</dbReference>
<dbReference type="GO" id="GO:0006412">
    <property type="term" value="P:translation"/>
    <property type="evidence" value="ECO:0007669"/>
    <property type="project" value="UniProtKB-UniRule"/>
</dbReference>
<dbReference type="FunFam" id="1.10.287.3980:FF:000001">
    <property type="entry name" value="Mitochondrial ribosomal protein L34"/>
    <property type="match status" value="1"/>
</dbReference>
<dbReference type="Gene3D" id="1.10.287.3980">
    <property type="match status" value="1"/>
</dbReference>
<dbReference type="HAMAP" id="MF_00391">
    <property type="entry name" value="Ribosomal_bL34"/>
    <property type="match status" value="1"/>
</dbReference>
<dbReference type="InterPro" id="IPR000271">
    <property type="entry name" value="Ribosomal_bL34"/>
</dbReference>
<dbReference type="InterPro" id="IPR020939">
    <property type="entry name" value="Ribosomal_bL34_CS"/>
</dbReference>
<dbReference type="NCBIfam" id="TIGR01030">
    <property type="entry name" value="rpmH_bact"/>
    <property type="match status" value="1"/>
</dbReference>
<dbReference type="PANTHER" id="PTHR14503:SF4">
    <property type="entry name" value="LARGE RIBOSOMAL SUBUNIT PROTEIN BL34M"/>
    <property type="match status" value="1"/>
</dbReference>
<dbReference type="PANTHER" id="PTHR14503">
    <property type="entry name" value="MITOCHONDRIAL RIBOSOMAL PROTEIN 34 FAMILY MEMBER"/>
    <property type="match status" value="1"/>
</dbReference>
<dbReference type="Pfam" id="PF00468">
    <property type="entry name" value="Ribosomal_L34"/>
    <property type="match status" value="1"/>
</dbReference>
<dbReference type="PROSITE" id="PS00784">
    <property type="entry name" value="RIBOSOMAL_L34"/>
    <property type="match status" value="1"/>
</dbReference>
<sequence length="44" mass="5122">MKRTYQPSVVRRKRTHGFRVRMATRGGRAVLNARRAKGRKRLAA</sequence>
<proteinExistence type="inferred from homology"/>
<accession>A4GAN6</accession>
<feature type="chain" id="PRO_1000013354" description="Large ribosomal subunit protein bL34">
    <location>
        <begin position="1"/>
        <end position="44"/>
    </location>
</feature>
<reference key="1">
    <citation type="journal article" date="2007" name="PLoS Genet.">
        <title>A tale of two oxidation states: bacterial colonization of arsenic-rich environments.</title>
        <authorList>
            <person name="Muller D."/>
            <person name="Medigue C."/>
            <person name="Koechler S."/>
            <person name="Barbe V."/>
            <person name="Barakat M."/>
            <person name="Talla E."/>
            <person name="Bonnefoy V."/>
            <person name="Krin E."/>
            <person name="Arsene-Ploetze F."/>
            <person name="Carapito C."/>
            <person name="Chandler M."/>
            <person name="Cournoyer B."/>
            <person name="Cruveiller S."/>
            <person name="Dossat C."/>
            <person name="Duval S."/>
            <person name="Heymann M."/>
            <person name="Leize E."/>
            <person name="Lieutaud A."/>
            <person name="Lievremont D."/>
            <person name="Makita Y."/>
            <person name="Mangenot S."/>
            <person name="Nitschke W."/>
            <person name="Ortet P."/>
            <person name="Perdrial N."/>
            <person name="Schoepp B."/>
            <person name="Siguier P."/>
            <person name="Simeonova D.D."/>
            <person name="Rouy Z."/>
            <person name="Segurens B."/>
            <person name="Turlin E."/>
            <person name="Vallenet D."/>
            <person name="van Dorsselaer A."/>
            <person name="Weiss S."/>
            <person name="Weissenbach J."/>
            <person name="Lett M.-C."/>
            <person name="Danchin A."/>
            <person name="Bertin P.N."/>
        </authorList>
    </citation>
    <scope>NUCLEOTIDE SEQUENCE [LARGE SCALE GENOMIC DNA]</scope>
    <source>
        <strain>ULPAs1</strain>
    </source>
</reference>
<keyword id="KW-1185">Reference proteome</keyword>
<keyword id="KW-0687">Ribonucleoprotein</keyword>
<keyword id="KW-0689">Ribosomal protein</keyword>
<gene>
    <name evidence="1" type="primary">rpmH</name>
    <name type="ordered locus">HEAR3472</name>
</gene>
<comment type="similarity">
    <text evidence="1">Belongs to the bacterial ribosomal protein bL34 family.</text>
</comment>
<organism>
    <name type="scientific">Herminiimonas arsenicoxydans</name>
    <dbReference type="NCBI Taxonomy" id="204773"/>
    <lineage>
        <taxon>Bacteria</taxon>
        <taxon>Pseudomonadati</taxon>
        <taxon>Pseudomonadota</taxon>
        <taxon>Betaproteobacteria</taxon>
        <taxon>Burkholderiales</taxon>
        <taxon>Oxalobacteraceae</taxon>
        <taxon>Herminiimonas</taxon>
    </lineage>
</organism>
<name>RL34_HERAR</name>
<protein>
    <recommendedName>
        <fullName evidence="1">Large ribosomal subunit protein bL34</fullName>
    </recommendedName>
    <alternativeName>
        <fullName evidence="2">50S ribosomal protein L34</fullName>
    </alternativeName>
</protein>